<proteinExistence type="inferred from homology"/>
<dbReference type="EMBL" id="BX936398">
    <property type="protein sequence ID" value="CAH21300.1"/>
    <property type="molecule type" value="Genomic_DNA"/>
</dbReference>
<dbReference type="RefSeq" id="WP_002211743.1">
    <property type="nucleotide sequence ID" value="NZ_CP009712.1"/>
</dbReference>
<dbReference type="SMR" id="Q66AR8"/>
<dbReference type="KEGG" id="ypo:BZ17_402"/>
<dbReference type="KEGG" id="yps:YPTB2062"/>
<dbReference type="PATRIC" id="fig|273123.14.peg.430"/>
<dbReference type="Proteomes" id="UP000001011">
    <property type="component" value="Chromosome"/>
</dbReference>
<dbReference type="Gene3D" id="3.10.510.20">
    <property type="entry name" value="YcgL domain"/>
    <property type="match status" value="1"/>
</dbReference>
<dbReference type="HAMAP" id="MF_01866">
    <property type="entry name" value="UPF0745"/>
    <property type="match status" value="1"/>
</dbReference>
<dbReference type="InterPro" id="IPR038068">
    <property type="entry name" value="YcgL-like_sf"/>
</dbReference>
<dbReference type="InterPro" id="IPR027354">
    <property type="entry name" value="YcgL_dom"/>
</dbReference>
<dbReference type="PANTHER" id="PTHR38109">
    <property type="entry name" value="PROTEIN YCGL"/>
    <property type="match status" value="1"/>
</dbReference>
<dbReference type="PANTHER" id="PTHR38109:SF1">
    <property type="entry name" value="PROTEIN YCGL"/>
    <property type="match status" value="1"/>
</dbReference>
<dbReference type="Pfam" id="PF05166">
    <property type="entry name" value="YcgL"/>
    <property type="match status" value="1"/>
</dbReference>
<dbReference type="SUPFAM" id="SSF160191">
    <property type="entry name" value="YcgL-like"/>
    <property type="match status" value="1"/>
</dbReference>
<dbReference type="PROSITE" id="PS51648">
    <property type="entry name" value="YCGL"/>
    <property type="match status" value="1"/>
</dbReference>
<organism>
    <name type="scientific">Yersinia pseudotuberculosis serotype I (strain IP32953)</name>
    <dbReference type="NCBI Taxonomy" id="273123"/>
    <lineage>
        <taxon>Bacteria</taxon>
        <taxon>Pseudomonadati</taxon>
        <taxon>Pseudomonadota</taxon>
        <taxon>Gammaproteobacteria</taxon>
        <taxon>Enterobacterales</taxon>
        <taxon>Yersiniaceae</taxon>
        <taxon>Yersinia</taxon>
    </lineage>
</organism>
<name>Y2062_YERPS</name>
<evidence type="ECO:0000255" key="1">
    <source>
        <dbReference type="HAMAP-Rule" id="MF_01866"/>
    </source>
</evidence>
<accession>Q66AR8</accession>
<protein>
    <recommendedName>
        <fullName evidence="1">YcgL domain-containing protein YPTB2062</fullName>
    </recommendedName>
</protein>
<gene>
    <name type="ordered locus">YPTB2062</name>
</gene>
<feature type="chain" id="PRO_0000375416" description="YcgL domain-containing protein YPTB2062">
    <location>
        <begin position="1"/>
        <end position="90"/>
    </location>
</feature>
<feature type="domain" description="YcgL" evidence="1">
    <location>
        <begin position="1"/>
        <end position="85"/>
    </location>
</feature>
<sequence>MLCAIYRSPKRDQTYLYIEKKDDFSRVPAELLASFGKPQFAMLLALNERKTLATADVEKVKNALIEQGFYLQVPPPPESLLKMHLGETKA</sequence>
<reference key="1">
    <citation type="journal article" date="2004" name="Proc. Natl. Acad. Sci. U.S.A.">
        <title>Insights into the evolution of Yersinia pestis through whole-genome comparison with Yersinia pseudotuberculosis.</title>
        <authorList>
            <person name="Chain P.S.G."/>
            <person name="Carniel E."/>
            <person name="Larimer F.W."/>
            <person name="Lamerdin J."/>
            <person name="Stoutland P.O."/>
            <person name="Regala W.M."/>
            <person name="Georgescu A.M."/>
            <person name="Vergez L.M."/>
            <person name="Land M.L."/>
            <person name="Motin V.L."/>
            <person name="Brubaker R.R."/>
            <person name="Fowler J."/>
            <person name="Hinnebusch J."/>
            <person name="Marceau M."/>
            <person name="Medigue C."/>
            <person name="Simonet M."/>
            <person name="Chenal-Francisque V."/>
            <person name="Souza B."/>
            <person name="Dacheux D."/>
            <person name="Elliott J.M."/>
            <person name="Derbise A."/>
            <person name="Hauser L.J."/>
            <person name="Garcia E."/>
        </authorList>
    </citation>
    <scope>NUCLEOTIDE SEQUENCE [LARGE SCALE GENOMIC DNA]</scope>
    <source>
        <strain>IP32953</strain>
    </source>
</reference>